<name>FUB10_GIBM7</name>
<organism>
    <name type="scientific">Gibberella moniliformis (strain M3125 / FGSC 7600)</name>
    <name type="common">Maize ear and stalk rot fungus</name>
    <name type="synonym">Fusarium verticillioides</name>
    <dbReference type="NCBI Taxonomy" id="334819"/>
    <lineage>
        <taxon>Eukaryota</taxon>
        <taxon>Fungi</taxon>
        <taxon>Dikarya</taxon>
        <taxon>Ascomycota</taxon>
        <taxon>Pezizomycotina</taxon>
        <taxon>Sordariomycetes</taxon>
        <taxon>Hypocreomycetidae</taxon>
        <taxon>Hypocreales</taxon>
        <taxon>Nectriaceae</taxon>
        <taxon>Fusarium</taxon>
        <taxon>Fusarium fujikuroi species complex</taxon>
    </lineage>
</organism>
<proteinExistence type="evidence at protein level"/>
<evidence type="ECO:0000255" key="1">
    <source>
        <dbReference type="PROSITE-ProRule" id="PRU00227"/>
    </source>
</evidence>
<evidence type="ECO:0000256" key="2">
    <source>
        <dbReference type="SAM" id="MobiDB-lite"/>
    </source>
</evidence>
<evidence type="ECO:0000269" key="3">
    <source>
    </source>
</evidence>
<evidence type="ECO:0000269" key="4">
    <source>
    </source>
</evidence>
<evidence type="ECO:0000269" key="5">
    <source>
    </source>
</evidence>
<evidence type="ECO:0000269" key="6">
    <source>
    </source>
</evidence>
<evidence type="ECO:0000269" key="7">
    <source>
    </source>
</evidence>
<evidence type="ECO:0000269" key="8">
    <source>
    </source>
</evidence>
<evidence type="ECO:0000269" key="9">
    <source>
    </source>
</evidence>
<evidence type="ECO:0000269" key="10">
    <source>
    </source>
</evidence>
<evidence type="ECO:0000269" key="11">
    <source>
    </source>
</evidence>
<evidence type="ECO:0000303" key="12">
    <source>
    </source>
</evidence>
<evidence type="ECO:0000305" key="13">
    <source>
    </source>
</evidence>
<gene>
    <name evidence="12" type="primary">FUB10</name>
    <name type="ORF">FVEG_12532</name>
</gene>
<dbReference type="EMBL" id="CM000580">
    <property type="protein sequence ID" value="EWG54278.1"/>
    <property type="molecule type" value="Genomic_DNA"/>
</dbReference>
<dbReference type="RefSeq" id="XP_018760469.1">
    <property type="nucleotide sequence ID" value="XM_018901874.1"/>
</dbReference>
<dbReference type="SMR" id="W7MS18"/>
<dbReference type="STRING" id="334819.W7MS18"/>
<dbReference type="EnsemblFungi" id="FVEG_12532T0">
    <property type="protein sequence ID" value="FVEG_12532T0"/>
    <property type="gene ID" value="FVEG_12532"/>
</dbReference>
<dbReference type="GeneID" id="30069965"/>
<dbReference type="KEGG" id="fvr:FVEG_12532"/>
<dbReference type="VEuPathDB" id="FungiDB:FVEG_12532"/>
<dbReference type="eggNOG" id="ENOG502SX45">
    <property type="taxonomic scope" value="Eukaryota"/>
</dbReference>
<dbReference type="HOGENOM" id="CLU_731701_0_0_1"/>
<dbReference type="OMA" id="PHEARIC"/>
<dbReference type="OrthoDB" id="120859at110618"/>
<dbReference type="PHI-base" id="PHI:3382"/>
<dbReference type="Proteomes" id="UP000009096">
    <property type="component" value="Chromosome 3"/>
</dbReference>
<dbReference type="GO" id="GO:0005634">
    <property type="term" value="C:nucleus"/>
    <property type="evidence" value="ECO:0007669"/>
    <property type="project" value="UniProtKB-SubCell"/>
</dbReference>
<dbReference type="GO" id="GO:0000981">
    <property type="term" value="F:DNA-binding transcription factor activity, RNA polymerase II-specific"/>
    <property type="evidence" value="ECO:0007669"/>
    <property type="project" value="InterPro"/>
</dbReference>
<dbReference type="GO" id="GO:0008270">
    <property type="term" value="F:zinc ion binding"/>
    <property type="evidence" value="ECO:0007669"/>
    <property type="project" value="InterPro"/>
</dbReference>
<dbReference type="GO" id="GO:0001080">
    <property type="term" value="P:nitrogen catabolite activation of transcription from RNA polymerase II promoter"/>
    <property type="evidence" value="ECO:0007669"/>
    <property type="project" value="TreeGrafter"/>
</dbReference>
<dbReference type="CDD" id="cd00067">
    <property type="entry name" value="GAL4"/>
    <property type="match status" value="1"/>
</dbReference>
<dbReference type="Gene3D" id="4.10.240.10">
    <property type="entry name" value="Zn(2)-C6 fungal-type DNA-binding domain"/>
    <property type="match status" value="1"/>
</dbReference>
<dbReference type="InterPro" id="IPR050797">
    <property type="entry name" value="Carb_Metab_Trans_Reg"/>
</dbReference>
<dbReference type="InterPro" id="IPR036864">
    <property type="entry name" value="Zn2-C6_fun-type_DNA-bd_sf"/>
</dbReference>
<dbReference type="InterPro" id="IPR001138">
    <property type="entry name" value="Zn2Cys6_DnaBD"/>
</dbReference>
<dbReference type="PANTHER" id="PTHR31668">
    <property type="entry name" value="GLUCOSE TRANSPORT TRANSCRIPTION REGULATOR RGT1-RELATED-RELATED"/>
    <property type="match status" value="1"/>
</dbReference>
<dbReference type="PANTHER" id="PTHR31668:SF4">
    <property type="entry name" value="TRANSCRIPTIONAL ACTIVATOR PROTEIN DAL81"/>
    <property type="match status" value="1"/>
</dbReference>
<dbReference type="Pfam" id="PF00172">
    <property type="entry name" value="Zn_clus"/>
    <property type="match status" value="1"/>
</dbReference>
<dbReference type="SUPFAM" id="SSF57701">
    <property type="entry name" value="Zn2/Cys6 DNA-binding domain"/>
    <property type="match status" value="1"/>
</dbReference>
<dbReference type="PROSITE" id="PS00463">
    <property type="entry name" value="ZN2_CY6_FUNGAL_1"/>
    <property type="match status" value="1"/>
</dbReference>
<dbReference type="PROSITE" id="PS50048">
    <property type="entry name" value="ZN2_CY6_FUNGAL_2"/>
    <property type="match status" value="1"/>
</dbReference>
<accession>W7MS18</accession>
<comment type="function">
    <text evidence="13">Transcription factor that regulates the expression of the gene cluster that mediates the biosynthesis of fusaric acid, a mycotoxin with low to moderate toxicity to animals and humans, but with high phytotoxic properties (PubMed:25372119).</text>
</comment>
<comment type="subcellular location">
    <subcellularLocation>
        <location evidence="1">Nucleus</location>
    </subcellularLocation>
</comment>
<comment type="induction">
    <text evidence="7">Expression is positively regulated by the secondary metabolism regulator LAE1 (PubMed:22713715).</text>
</comment>
<comment type="disruption phenotype">
    <text evidence="11">Abolishes the expression of FUB1, FUB3 and FUB8, and impairs the production of fusaric acid (PubMed:25372119).</text>
</comment>
<comment type="biotechnology">
    <text evidence="3 4 5 6 8 9 10">Fusaric acid is phytotoxic to plants such as cotton and banana (PubMed:20955724, PubMed:23922960). It has been shown to induce programmed cell death in plants (PubMed:16868776, PubMed:23838885). In addition to a mild toxicity to animals, fusaric acid exhibits acanthamoebicidal, antioomycete, and antimycobacterial activities (PubMed:17927749, PubMed:21811925, PubMed:22864988).</text>
</comment>
<reference key="1">
    <citation type="journal article" date="2010" name="Nature">
        <title>Comparative genomics reveals mobile pathogenicity chromosomes in Fusarium.</title>
        <authorList>
            <person name="Ma L.-J."/>
            <person name="van der Does H.C."/>
            <person name="Borkovich K.A."/>
            <person name="Coleman J.J."/>
            <person name="Daboussi M.-J."/>
            <person name="Di Pietro A."/>
            <person name="Dufresne M."/>
            <person name="Freitag M."/>
            <person name="Grabherr M."/>
            <person name="Henrissat B."/>
            <person name="Houterman P.M."/>
            <person name="Kang S."/>
            <person name="Shim W.-B."/>
            <person name="Woloshuk C."/>
            <person name="Xie X."/>
            <person name="Xu J.-R."/>
            <person name="Antoniw J."/>
            <person name="Baker S.E."/>
            <person name="Bluhm B.H."/>
            <person name="Breakspear A."/>
            <person name="Brown D.W."/>
            <person name="Butchko R.A.E."/>
            <person name="Chapman S."/>
            <person name="Coulson R."/>
            <person name="Coutinho P.M."/>
            <person name="Danchin E.G.J."/>
            <person name="Diener A."/>
            <person name="Gale L.R."/>
            <person name="Gardiner D.M."/>
            <person name="Goff S."/>
            <person name="Hammond-Kosack K.E."/>
            <person name="Hilburn K."/>
            <person name="Hua-Van A."/>
            <person name="Jonkers W."/>
            <person name="Kazan K."/>
            <person name="Kodira C.D."/>
            <person name="Koehrsen M."/>
            <person name="Kumar L."/>
            <person name="Lee Y.-H."/>
            <person name="Li L."/>
            <person name="Manners J.M."/>
            <person name="Miranda-Saavedra D."/>
            <person name="Mukherjee M."/>
            <person name="Park G."/>
            <person name="Park J."/>
            <person name="Park S.-Y."/>
            <person name="Proctor R.H."/>
            <person name="Regev A."/>
            <person name="Ruiz-Roldan M.C."/>
            <person name="Sain D."/>
            <person name="Sakthikumar S."/>
            <person name="Sykes S."/>
            <person name="Schwartz D.C."/>
            <person name="Turgeon B.G."/>
            <person name="Wapinski I."/>
            <person name="Yoder O."/>
            <person name="Young S."/>
            <person name="Zeng Q."/>
            <person name="Zhou S."/>
            <person name="Galagan J."/>
            <person name="Cuomo C.A."/>
            <person name="Kistler H.C."/>
            <person name="Rep M."/>
        </authorList>
    </citation>
    <scope>NUCLEOTIDE SEQUENCE [LARGE SCALE GENOMIC DNA]</scope>
    <source>
        <strain>M3125 / FGSC 7600</strain>
    </source>
</reference>
<reference key="2">
    <citation type="journal article" date="2006" name="Planta">
        <title>Fusaric acid induces apoptosis in saffron root-tip cells: roles of caspase-like activity, cytochrome c, and H2O2.</title>
        <authorList>
            <person name="Samadi L."/>
            <person name="Shahsavan Behboodi B."/>
        </authorList>
    </citation>
    <scope>BIOTECHNOLOGY</scope>
</reference>
<reference key="3">
    <citation type="journal article" date="2008" name="J. Appl. Microbiol.">
        <title>Bikaverin and fusaric acid from Fusarium oxysporum show antioomycete activity against Phytophthora infestans.</title>
        <authorList>
            <person name="Son S.W."/>
            <person name="Kim H.Y."/>
            <person name="Choi G.J."/>
            <person name="Lim H.K."/>
            <person name="Jang K.S."/>
            <person name="Lee S.O."/>
            <person name="Lee S."/>
            <person name="Sung N.D."/>
            <person name="Kim J.C."/>
        </authorList>
    </citation>
    <scope>BIOTECHNOLOGY</scope>
</reference>
<reference key="4">
    <citation type="journal article" date="2011" name="Arch. Pharm. Res.">
        <title>Antimycobacterial activity of fusaric acid from a mangrove endophyte and its metal complexes.</title>
        <authorList>
            <person name="Pan J.H."/>
            <person name="Chen Y."/>
            <person name="Huang Y.H."/>
            <person name="Tao Y.W."/>
            <person name="Wang J."/>
            <person name="Li Y."/>
            <person name="Peng Y."/>
            <person name="Dong T."/>
            <person name="Lai X.M."/>
            <person name="Lin Y.C."/>
        </authorList>
    </citation>
    <scope>BIOTECHNOLOGY</scope>
</reference>
<reference key="5">
    <citation type="journal article" date="2011" name="Toxicon">
        <title>Phytotoxicity of fusaric acid and analogs to cotton.</title>
        <authorList>
            <person name="Stipanovic R.D."/>
            <person name="Puckhaber L.S."/>
            <person name="Liu J."/>
            <person name="Bell A.A."/>
        </authorList>
    </citation>
    <scope>BIOTECHNOLOGY</scope>
</reference>
<reference key="6">
    <citation type="journal article" date="2012" name="Fungal Genet. Biol.">
        <title>Lae1 regulates expression of multiple secondary metabolite gene clusters in Fusarium verticillioides.</title>
        <authorList>
            <person name="Butchko R.A."/>
            <person name="Brown D.W."/>
            <person name="Busman M."/>
            <person name="Tudzynski B."/>
            <person name="Wiemann P."/>
        </authorList>
    </citation>
    <scope>INDUCTION</scope>
</reference>
<reference key="7">
    <citation type="journal article" date="2012" name="Planta Med.">
        <title>In vitro acanthamoebicidal activity of fusaric acid and dehydrofusaric acid from an endophytic fungus Fusarium sp. Tlau3.</title>
        <authorList>
            <person name="Boonman N."/>
            <person name="Prachya S."/>
            <person name="Boonmee A."/>
            <person name="Kittakoop P."/>
            <person name="Wiyakrutta S."/>
            <person name="Sriubolmas N."/>
            <person name="Warit S."/>
            <person name="Dharmkrong-At Chusattayanond A."/>
        </authorList>
    </citation>
    <scope>BIOTECHNOLOGY</scope>
</reference>
<reference key="8">
    <citation type="journal article" date="2013" name="Planta">
        <title>Fusaric acid induction of programmed cell death modulated through nitric oxide signalling in tobacco suspension cells.</title>
        <authorList>
            <person name="Jiao J."/>
            <person name="Zhou B."/>
            <person name="Zhu X."/>
            <person name="Gao Z."/>
            <person name="Liang Y."/>
        </authorList>
    </citation>
    <scope>BIOTECHNOLOGY</scope>
</reference>
<reference key="9">
    <citation type="journal article" date="2013" name="PLoS ONE">
        <title>Contamination of bananas with beauvericin and fusaric acid produced by Fusarium oxysporum f. sp. cubense.</title>
        <authorList>
            <person name="Li C."/>
            <person name="Zuo C."/>
            <person name="Deng G."/>
            <person name="Kuang R."/>
            <person name="Yang Q."/>
            <person name="Hu C."/>
            <person name="Sheng O."/>
            <person name="Zhang S."/>
            <person name="Ma L."/>
            <person name="Wei Y."/>
            <person name="Yang J."/>
            <person name="Liu S."/>
            <person name="Biswas M.K."/>
            <person name="Viljoen A."/>
            <person name="Yi G."/>
        </authorList>
    </citation>
    <scope>BIOTECHNOLOGY</scope>
</reference>
<reference key="10">
    <citation type="journal article" date="2015" name="Mol. Plant Microbe Interact.">
        <title>Identification of a 12-gene fusaric acid biosynthetic gene cluster in Fusarium species through comparative and functional genomics.</title>
        <authorList>
            <person name="Brown D.W."/>
            <person name="Lee S.H."/>
            <person name="Kim L.H."/>
            <person name="Ryu J.G."/>
            <person name="Lee S."/>
            <person name="Seo Y."/>
            <person name="Kim Y.H."/>
            <person name="Busman M."/>
            <person name="Yun S.H."/>
            <person name="Proctor R.H."/>
            <person name="Lee T."/>
        </authorList>
    </citation>
    <scope>FUNCTION</scope>
    <scope>DISRUPTION PHENOTYPE</scope>
</reference>
<keyword id="KW-0539">Nucleus</keyword>
<keyword id="KW-1185">Reference proteome</keyword>
<protein>
    <recommendedName>
        <fullName evidence="12">Fusaric acid cluster transcription factor FUB10</fullName>
    </recommendedName>
    <alternativeName>
        <fullName evidence="12">Fusaric acid biosynthesis protein 10</fullName>
    </alternativeName>
</protein>
<feature type="chain" id="PRO_0000437328" description="Fusaric acid cluster transcription factor FUB10">
    <location>
        <begin position="1"/>
        <end position="421"/>
    </location>
</feature>
<feature type="DNA-binding region" description="Zn(2)-C6 fungal-type" evidence="1">
    <location>
        <begin position="16"/>
        <end position="47"/>
    </location>
</feature>
<feature type="region of interest" description="Disordered" evidence="2">
    <location>
        <begin position="50"/>
        <end position="92"/>
    </location>
</feature>
<feature type="compositionally biased region" description="Low complexity" evidence="2">
    <location>
        <begin position="74"/>
        <end position="86"/>
    </location>
</feature>
<sequence>MAGDFSNRAPWKRSACDRCRAQKLRCHRDSGHSTDACLRCLKSGIECVTSKARPTGRPPSRQVQPTVVVEQGDTSSSSHTTDSSPSAGGTDMSNMMNFEYDLSLDNILDSIGMQHSDFMVNDNILVDISPLSSSQSTGQHSVTQAQVQAQTVDPSTIQSTASYQFNSLPSTSSMDSALPIRSDHVELLLSRLHSKLSAQLYSIRSSPWDIKGTLNLSLAHQGIGQDFENCESHPLVQVSQACTELERLLSGLRVPASAEHTPSSFSYTPAVPPRLRTTQLLIALSCYIQIVSIYGIIFSKVFDYLLSTSKTSNGSYQSSPLTLYIGGLPIPPNETLSGNLLVHLIEHQLHQIEQLMGLPEHYRVSSRAKDTKDGELGLFGSQHSQSLLNAAIQLGEDRDGNHDDIRCVRALKVVMRQIKDF</sequence>